<reference key="1">
    <citation type="submission" date="2008-10" db="EMBL/GenBank/DDBJ databases">
        <title>Genome sequence of Bacillus cereus AH820.</title>
        <authorList>
            <person name="Dodson R.J."/>
            <person name="Durkin A.S."/>
            <person name="Rosovitz M.J."/>
            <person name="Rasko D.A."/>
            <person name="Hoffmaster A."/>
            <person name="Ravel J."/>
            <person name="Sutton G."/>
        </authorList>
    </citation>
    <scope>NUCLEOTIDE SEQUENCE [LARGE SCALE GENOMIC DNA]</scope>
    <source>
        <strain>AH820</strain>
    </source>
</reference>
<proteinExistence type="inferred from homology"/>
<evidence type="ECO:0000255" key="1">
    <source>
        <dbReference type="HAMAP-Rule" id="MF_01515"/>
    </source>
</evidence>
<organism>
    <name type="scientific">Bacillus cereus (strain AH820)</name>
    <dbReference type="NCBI Taxonomy" id="405535"/>
    <lineage>
        <taxon>Bacteria</taxon>
        <taxon>Bacillati</taxon>
        <taxon>Bacillota</taxon>
        <taxon>Bacilli</taxon>
        <taxon>Bacillales</taxon>
        <taxon>Bacillaceae</taxon>
        <taxon>Bacillus</taxon>
        <taxon>Bacillus cereus group</taxon>
    </lineage>
</organism>
<protein>
    <recommendedName>
        <fullName evidence="1">UPF0316 protein BCAH820_3389</fullName>
    </recommendedName>
</protein>
<accession>B7JG51</accession>
<sequence>MLQALLIFVLQIIYVPILTIRTILLVKNQTRSAAAVGLLEGAIYIVSLGIVFQDLSNWMNIVAYVIGFSAGLLLGGYIENKLAIGYITYQVSLLDRCNELVDELRHSGFGVTVFEGEGINSIRYRLDIVAKRSREKELLEIINEIAPKAFMSSYEIRSFKGGYLTKAMKKRALMKKKDHHVS</sequence>
<comment type="subcellular location">
    <subcellularLocation>
        <location evidence="1">Cell membrane</location>
        <topology evidence="1">Multi-pass membrane protein</topology>
    </subcellularLocation>
</comment>
<comment type="similarity">
    <text evidence="1">Belongs to the UPF0316 family.</text>
</comment>
<feature type="chain" id="PRO_1000198416" description="UPF0316 protein BCAH820_3389">
    <location>
        <begin position="1"/>
        <end position="182"/>
    </location>
</feature>
<feature type="transmembrane region" description="Helical" evidence="1">
    <location>
        <begin position="6"/>
        <end position="26"/>
    </location>
</feature>
<feature type="transmembrane region" description="Helical" evidence="1">
    <location>
        <begin position="32"/>
        <end position="52"/>
    </location>
</feature>
<feature type="transmembrane region" description="Helical" evidence="1">
    <location>
        <begin position="58"/>
        <end position="78"/>
    </location>
</feature>
<dbReference type="EMBL" id="CP001283">
    <property type="protein sequence ID" value="ACK88416.1"/>
    <property type="molecule type" value="Genomic_DNA"/>
</dbReference>
<dbReference type="RefSeq" id="WP_000938435.1">
    <property type="nucleotide sequence ID" value="NC_011773.1"/>
</dbReference>
<dbReference type="SMR" id="B7JG51"/>
<dbReference type="KEGG" id="bcu:BCAH820_3389"/>
<dbReference type="HOGENOM" id="CLU_106166_1_1_9"/>
<dbReference type="Proteomes" id="UP000001363">
    <property type="component" value="Chromosome"/>
</dbReference>
<dbReference type="GO" id="GO:0005886">
    <property type="term" value="C:plasma membrane"/>
    <property type="evidence" value="ECO:0007669"/>
    <property type="project" value="UniProtKB-SubCell"/>
</dbReference>
<dbReference type="CDD" id="cd16381">
    <property type="entry name" value="YitT_C_like_1"/>
    <property type="match status" value="1"/>
</dbReference>
<dbReference type="HAMAP" id="MF_01515">
    <property type="entry name" value="UPF0316"/>
    <property type="match status" value="1"/>
</dbReference>
<dbReference type="InterPro" id="IPR019264">
    <property type="entry name" value="DUF2179"/>
</dbReference>
<dbReference type="InterPro" id="IPR044035">
    <property type="entry name" value="DUF5698"/>
</dbReference>
<dbReference type="InterPro" id="IPR022930">
    <property type="entry name" value="UPF0316"/>
</dbReference>
<dbReference type="NCBIfam" id="NF003193">
    <property type="entry name" value="PRK04164.1-4"/>
    <property type="match status" value="1"/>
</dbReference>
<dbReference type="NCBIfam" id="NF003194">
    <property type="entry name" value="PRK04164.1-5"/>
    <property type="match status" value="1"/>
</dbReference>
<dbReference type="PANTHER" id="PTHR40060">
    <property type="entry name" value="UPF0316 PROTEIN YEBE"/>
    <property type="match status" value="1"/>
</dbReference>
<dbReference type="PANTHER" id="PTHR40060:SF1">
    <property type="entry name" value="UPF0316 PROTEIN YEBE"/>
    <property type="match status" value="1"/>
</dbReference>
<dbReference type="Pfam" id="PF10035">
    <property type="entry name" value="DUF2179"/>
    <property type="match status" value="1"/>
</dbReference>
<dbReference type="Pfam" id="PF18955">
    <property type="entry name" value="DUF5698"/>
    <property type="match status" value="1"/>
</dbReference>
<name>Y3389_BACC0</name>
<gene>
    <name type="ordered locus">BCAH820_3389</name>
</gene>
<keyword id="KW-1003">Cell membrane</keyword>
<keyword id="KW-0472">Membrane</keyword>
<keyword id="KW-0812">Transmembrane</keyword>
<keyword id="KW-1133">Transmembrane helix</keyword>